<organism>
    <name type="scientific">Shewanella putrefaciens (strain CN-32 / ATCC BAA-453)</name>
    <dbReference type="NCBI Taxonomy" id="319224"/>
    <lineage>
        <taxon>Bacteria</taxon>
        <taxon>Pseudomonadati</taxon>
        <taxon>Pseudomonadota</taxon>
        <taxon>Gammaproteobacteria</taxon>
        <taxon>Alteromonadales</taxon>
        <taxon>Shewanellaceae</taxon>
        <taxon>Shewanella</taxon>
    </lineage>
</organism>
<gene>
    <name evidence="1" type="primary">fadR</name>
    <name type="ordered locus">Sputcn32_1683</name>
</gene>
<sequence>MIINAKGPASFAEKYIVRSIWENKFPPGSILPAERELSELIGVTRTTLREVLQRLARDGWLKIQHGKPTRVNNFWETSGLNILETIADLNPEGFPVLVDQLLSARTNVSAIYFRGALRYNPETAVDVLAKIHQLENTAESFAEYDYLLHHTLAFSSGNPLYVLILNGFKGLYSRVGRYYFSSAEARLLALNFYKELEVLAKAKNYTDVPALMRTYGINSGKMWLQLRDDMPASIAQDN</sequence>
<reference key="1">
    <citation type="submission" date="2007-04" db="EMBL/GenBank/DDBJ databases">
        <title>Complete sequence of Shewanella putrefaciens CN-32.</title>
        <authorList>
            <consortium name="US DOE Joint Genome Institute"/>
            <person name="Copeland A."/>
            <person name="Lucas S."/>
            <person name="Lapidus A."/>
            <person name="Barry K."/>
            <person name="Detter J.C."/>
            <person name="Glavina del Rio T."/>
            <person name="Hammon N."/>
            <person name="Israni S."/>
            <person name="Dalin E."/>
            <person name="Tice H."/>
            <person name="Pitluck S."/>
            <person name="Chain P."/>
            <person name="Malfatti S."/>
            <person name="Shin M."/>
            <person name="Vergez L."/>
            <person name="Schmutz J."/>
            <person name="Larimer F."/>
            <person name="Land M."/>
            <person name="Hauser L."/>
            <person name="Kyrpides N."/>
            <person name="Mikhailova N."/>
            <person name="Romine M.F."/>
            <person name="Fredrickson J."/>
            <person name="Tiedje J."/>
            <person name="Richardson P."/>
        </authorList>
    </citation>
    <scope>NUCLEOTIDE SEQUENCE [LARGE SCALE GENOMIC DNA]</scope>
    <source>
        <strain>CN-32 / ATCC BAA-453</strain>
    </source>
</reference>
<protein>
    <recommendedName>
        <fullName evidence="1">Fatty acid metabolism regulator protein</fullName>
    </recommendedName>
</protein>
<proteinExistence type="inferred from homology"/>
<keyword id="KW-0010">Activator</keyword>
<keyword id="KW-0963">Cytoplasm</keyword>
<keyword id="KW-0238">DNA-binding</keyword>
<keyword id="KW-0276">Fatty acid metabolism</keyword>
<keyword id="KW-0443">Lipid metabolism</keyword>
<keyword id="KW-0678">Repressor</keyword>
<keyword id="KW-0804">Transcription</keyword>
<keyword id="KW-0805">Transcription regulation</keyword>
<name>FADR_SHEPC</name>
<feature type="chain" id="PRO_1000045466" description="Fatty acid metabolism regulator protein">
    <location>
        <begin position="1"/>
        <end position="238"/>
    </location>
</feature>
<feature type="domain" description="HTH gntR-type" evidence="1">
    <location>
        <begin position="6"/>
        <end position="74"/>
    </location>
</feature>
<feature type="DNA-binding region" description="H-T-H motif" evidence="1">
    <location>
        <begin position="34"/>
        <end position="53"/>
    </location>
</feature>
<evidence type="ECO:0000255" key="1">
    <source>
        <dbReference type="HAMAP-Rule" id="MF_00696"/>
    </source>
</evidence>
<dbReference type="EMBL" id="CP000681">
    <property type="protein sequence ID" value="ABP75408.1"/>
    <property type="molecule type" value="Genomic_DNA"/>
</dbReference>
<dbReference type="SMR" id="A4Y625"/>
<dbReference type="STRING" id="319224.Sputcn32_1683"/>
<dbReference type="KEGG" id="spc:Sputcn32_1683"/>
<dbReference type="eggNOG" id="COG2186">
    <property type="taxonomic scope" value="Bacteria"/>
</dbReference>
<dbReference type="HOGENOM" id="CLU_017584_9_4_6"/>
<dbReference type="GO" id="GO:0005737">
    <property type="term" value="C:cytoplasm"/>
    <property type="evidence" value="ECO:0007669"/>
    <property type="project" value="UniProtKB-SubCell"/>
</dbReference>
<dbReference type="GO" id="GO:0003677">
    <property type="term" value="F:DNA binding"/>
    <property type="evidence" value="ECO:0007669"/>
    <property type="project" value="UniProtKB-KW"/>
</dbReference>
<dbReference type="GO" id="GO:0003700">
    <property type="term" value="F:DNA-binding transcription factor activity"/>
    <property type="evidence" value="ECO:0007669"/>
    <property type="project" value="UniProtKB-UniRule"/>
</dbReference>
<dbReference type="GO" id="GO:0000062">
    <property type="term" value="F:fatty-acyl-CoA binding"/>
    <property type="evidence" value="ECO:0007669"/>
    <property type="project" value="InterPro"/>
</dbReference>
<dbReference type="GO" id="GO:0006631">
    <property type="term" value="P:fatty acid metabolic process"/>
    <property type="evidence" value="ECO:0007669"/>
    <property type="project" value="UniProtKB-KW"/>
</dbReference>
<dbReference type="GO" id="GO:0019217">
    <property type="term" value="P:regulation of fatty acid metabolic process"/>
    <property type="evidence" value="ECO:0007669"/>
    <property type="project" value="UniProtKB-UniRule"/>
</dbReference>
<dbReference type="CDD" id="cd07377">
    <property type="entry name" value="WHTH_GntR"/>
    <property type="match status" value="1"/>
</dbReference>
<dbReference type="Gene3D" id="1.20.120.530">
    <property type="entry name" value="GntR ligand-binding domain-like"/>
    <property type="match status" value="1"/>
</dbReference>
<dbReference type="Gene3D" id="1.10.10.10">
    <property type="entry name" value="Winged helix-like DNA-binding domain superfamily/Winged helix DNA-binding domain"/>
    <property type="match status" value="1"/>
</dbReference>
<dbReference type="HAMAP" id="MF_00696">
    <property type="entry name" value="HTH_FadR"/>
    <property type="match status" value="1"/>
</dbReference>
<dbReference type="InterPro" id="IPR014178">
    <property type="entry name" value="FA-response_TF_FadR"/>
</dbReference>
<dbReference type="InterPro" id="IPR028374">
    <property type="entry name" value="FadR_C"/>
</dbReference>
<dbReference type="InterPro" id="IPR008920">
    <property type="entry name" value="TF_FadR/GntR_C"/>
</dbReference>
<dbReference type="InterPro" id="IPR000524">
    <property type="entry name" value="Tscrpt_reg_HTH_GntR"/>
</dbReference>
<dbReference type="InterPro" id="IPR036388">
    <property type="entry name" value="WH-like_DNA-bd_sf"/>
</dbReference>
<dbReference type="InterPro" id="IPR036390">
    <property type="entry name" value="WH_DNA-bd_sf"/>
</dbReference>
<dbReference type="NCBIfam" id="TIGR02812">
    <property type="entry name" value="fadR_gamma"/>
    <property type="match status" value="1"/>
</dbReference>
<dbReference type="NCBIfam" id="NF003444">
    <property type="entry name" value="PRK04984.1"/>
    <property type="match status" value="1"/>
</dbReference>
<dbReference type="PANTHER" id="PTHR43537:SF52">
    <property type="entry name" value="FATTY ACID METABOLISM REGULATOR PROTEIN"/>
    <property type="match status" value="1"/>
</dbReference>
<dbReference type="PANTHER" id="PTHR43537">
    <property type="entry name" value="TRANSCRIPTIONAL REGULATOR, GNTR FAMILY"/>
    <property type="match status" value="1"/>
</dbReference>
<dbReference type="Pfam" id="PF07840">
    <property type="entry name" value="FadR_C"/>
    <property type="match status" value="1"/>
</dbReference>
<dbReference type="Pfam" id="PF00392">
    <property type="entry name" value="GntR"/>
    <property type="match status" value="1"/>
</dbReference>
<dbReference type="PRINTS" id="PR00035">
    <property type="entry name" value="HTHGNTR"/>
</dbReference>
<dbReference type="SMART" id="SM00345">
    <property type="entry name" value="HTH_GNTR"/>
    <property type="match status" value="1"/>
</dbReference>
<dbReference type="SUPFAM" id="SSF48008">
    <property type="entry name" value="GntR ligand-binding domain-like"/>
    <property type="match status" value="1"/>
</dbReference>
<dbReference type="SUPFAM" id="SSF46785">
    <property type="entry name" value="Winged helix' DNA-binding domain"/>
    <property type="match status" value="1"/>
</dbReference>
<dbReference type="PROSITE" id="PS50949">
    <property type="entry name" value="HTH_GNTR"/>
    <property type="match status" value="1"/>
</dbReference>
<accession>A4Y625</accession>
<comment type="function">
    <text evidence="1">Multifunctional regulator of fatty acid metabolism.</text>
</comment>
<comment type="subunit">
    <text evidence="1">Homodimer.</text>
</comment>
<comment type="subcellular location">
    <subcellularLocation>
        <location evidence="1">Cytoplasm</location>
    </subcellularLocation>
</comment>